<reference key="1">
    <citation type="submission" date="1999-02" db="EMBL/GenBank/DDBJ databases">
        <title>Complete nucleotide sequence of a Chinese isolate of tomato mosaic virus.</title>
        <authorList>
            <person name="Zhou X."/>
            <person name="Xue C."/>
            <person name="Chen Q."/>
            <person name="Qi Y."/>
            <person name="Li D."/>
        </authorList>
    </citation>
    <scope>NUCLEOTIDE SEQUENCE [GENOMIC RNA]</scope>
</reference>
<comment type="function">
    <text>Capsid protein self-assembles to form rod-shaped virions about 18 nm in diameter with a central canal enclosing the viral genomic RNA.</text>
</comment>
<comment type="subcellular location">
    <subcellularLocation>
        <location evidence="2">Virion</location>
    </subcellularLocation>
</comment>
<comment type="similarity">
    <text evidence="2">Belongs to the virgaviridae capsid protein family.</text>
</comment>
<keyword id="KW-0007">Acetylation</keyword>
<keyword id="KW-0167">Capsid protein</keyword>
<keyword id="KW-1139">Helical capsid protein</keyword>
<keyword id="KW-0946">Virion</keyword>
<evidence type="ECO:0000250" key="1"/>
<evidence type="ECO:0000305" key="2"/>
<name>CAPSD_TOMS1</name>
<accession>O41345</accession>
<organism>
    <name type="scientific">Tomato mosaic virus (strain S-1)</name>
    <name type="common">ToMV</name>
    <dbReference type="NCBI Taxonomy" id="138314"/>
    <lineage>
        <taxon>Viruses</taxon>
        <taxon>Riboviria</taxon>
        <taxon>Orthornavirae</taxon>
        <taxon>Kitrinoviricota</taxon>
        <taxon>Alsuviricetes</taxon>
        <taxon>Martellivirales</taxon>
        <taxon>Virgaviridae</taxon>
        <taxon>Tobamovirus</taxon>
        <taxon>Tomato mosaic virus</taxon>
    </lineage>
</organism>
<dbReference type="EMBL" id="AJ132845">
    <property type="protein sequence ID" value="CAB37000.1"/>
    <property type="molecule type" value="Genomic_RNA"/>
</dbReference>
<dbReference type="EMBL" id="AJ011934">
    <property type="protein sequence ID" value="CAA09879.1"/>
    <property type="molecule type" value="Genomic_RNA"/>
</dbReference>
<dbReference type="EMBL" id="Z98201">
    <property type="protein sequence ID" value="CAB10892.1"/>
    <property type="molecule type" value="Genomic_RNA"/>
</dbReference>
<dbReference type="SMR" id="O41345"/>
<dbReference type="Proteomes" id="UP000008254">
    <property type="component" value="Genome"/>
</dbReference>
<dbReference type="GO" id="GO:0019029">
    <property type="term" value="C:helical viral capsid"/>
    <property type="evidence" value="ECO:0007669"/>
    <property type="project" value="UniProtKB-KW"/>
</dbReference>
<dbReference type="GO" id="GO:0005198">
    <property type="term" value="F:structural molecule activity"/>
    <property type="evidence" value="ECO:0007669"/>
    <property type="project" value="InterPro"/>
</dbReference>
<dbReference type="Gene3D" id="1.20.120.70">
    <property type="entry name" value="Tobacco mosaic virus-like, coat protein"/>
    <property type="match status" value="1"/>
</dbReference>
<dbReference type="InterPro" id="IPR001337">
    <property type="entry name" value="TMV-like_coat"/>
</dbReference>
<dbReference type="InterPro" id="IPR036417">
    <property type="entry name" value="TMV-like_coat_sf"/>
</dbReference>
<dbReference type="Pfam" id="PF00721">
    <property type="entry name" value="TMV_coat"/>
    <property type="match status" value="1"/>
</dbReference>
<dbReference type="SUPFAM" id="SSF47195">
    <property type="entry name" value="TMV-like viral coat proteins"/>
    <property type="match status" value="1"/>
</dbReference>
<feature type="initiator methionine" description="Removed; by host" evidence="1">
    <location>
        <position position="1"/>
    </location>
</feature>
<feature type="chain" id="PRO_0000144951" description="Capsid protein">
    <location>
        <begin position="2"/>
        <end position="159"/>
    </location>
</feature>
<feature type="modified residue" description="N-acetylserine; by host" evidence="1">
    <location>
        <position position="2"/>
    </location>
</feature>
<gene>
    <name type="primary">CP</name>
</gene>
<proteinExistence type="inferred from homology"/>
<organismHost>
    <name type="scientific">Antirrhinum majus</name>
    <name type="common">Garden snapdragon</name>
    <dbReference type="NCBI Taxonomy" id="4151"/>
</organismHost>
<organismHost>
    <name type="scientific">Capsicum</name>
    <name type="common">peppers</name>
    <dbReference type="NCBI Taxonomy" id="4071"/>
</organismHost>
<organismHost>
    <name type="scientific">Delphinium</name>
    <dbReference type="NCBI Taxonomy" id="46246"/>
</organismHost>
<organismHost>
    <name type="scientific">Petunia</name>
    <dbReference type="NCBI Taxonomy" id="4101"/>
</organismHost>
<organismHost>
    <name type="scientific">Solanum lycopersicum</name>
    <name type="common">Tomato</name>
    <name type="synonym">Lycopersicon esculentum</name>
    <dbReference type="NCBI Taxonomy" id="4081"/>
</organismHost>
<organismHost>
    <name type="scientific">Tagetes</name>
    <name type="common">marigolds</name>
    <dbReference type="NCBI Taxonomy" id="13707"/>
</organismHost>
<protein>
    <recommendedName>
        <fullName>Capsid protein</fullName>
    </recommendedName>
    <alternativeName>
        <fullName>Coat protein</fullName>
    </alternativeName>
</protein>
<sequence>MSYSITSPSQFVFLSSVWADPIELLNVCTNSLGNQFQTQQARTTVQQQFSEVWKPFPQSTVRFPGDVYKVYRYNAVLDPLITALLGSFDTRNRIIEVENQQSPTTAETLDATRRVDDATVAIRSAINNLVNELVRGTGLYNQNTFESMSGLVWTSAPAS</sequence>